<organism>
    <name type="scientific">Homo sapiens</name>
    <name type="common">Human</name>
    <dbReference type="NCBI Taxonomy" id="9606"/>
    <lineage>
        <taxon>Eukaryota</taxon>
        <taxon>Metazoa</taxon>
        <taxon>Chordata</taxon>
        <taxon>Craniata</taxon>
        <taxon>Vertebrata</taxon>
        <taxon>Euteleostomi</taxon>
        <taxon>Mammalia</taxon>
        <taxon>Eutheria</taxon>
        <taxon>Euarchontoglires</taxon>
        <taxon>Primates</taxon>
        <taxon>Haplorrhini</taxon>
        <taxon>Catarrhini</taxon>
        <taxon>Hominidae</taxon>
        <taxon>Homo</taxon>
    </lineage>
</organism>
<gene>
    <name type="primary">MIA</name>
</gene>
<dbReference type="EMBL" id="X75450">
    <property type="protein sequence ID" value="CAA53203.1"/>
    <property type="molecule type" value="mRNA"/>
</dbReference>
<dbReference type="EMBL" id="X84707">
    <property type="protein sequence ID" value="CAA59195.1"/>
    <property type="molecule type" value="Genomic_DNA"/>
</dbReference>
<dbReference type="EMBL" id="BT007044">
    <property type="protein sequence ID" value="AAP35693.1"/>
    <property type="molecule type" value="mRNA"/>
</dbReference>
<dbReference type="EMBL" id="CR541648">
    <property type="protein sequence ID" value="CAG46449.1"/>
    <property type="molecule type" value="mRNA"/>
</dbReference>
<dbReference type="EMBL" id="CH471126">
    <property type="protein sequence ID" value="EAW56997.1"/>
    <property type="molecule type" value="Genomic_DNA"/>
</dbReference>
<dbReference type="EMBL" id="BC005910">
    <property type="protein sequence ID" value="AAH05910.1"/>
    <property type="molecule type" value="mRNA"/>
</dbReference>
<dbReference type="CCDS" id="CCDS12566.1">
    <molecule id="Q16674-1"/>
</dbReference>
<dbReference type="PIR" id="I38019">
    <property type="entry name" value="I38019"/>
</dbReference>
<dbReference type="RefSeq" id="NP_001189482.1">
    <molecule id="Q16674-1"/>
    <property type="nucleotide sequence ID" value="NM_001202553.2"/>
</dbReference>
<dbReference type="RefSeq" id="NP_006524.1">
    <molecule id="Q16674-1"/>
    <property type="nucleotide sequence ID" value="NM_006533.4"/>
</dbReference>
<dbReference type="PDB" id="1HJD">
    <property type="method" value="NMR"/>
    <property type="chains" value="A=31-131"/>
</dbReference>
<dbReference type="PDB" id="1I1J">
    <property type="method" value="X-ray"/>
    <property type="resolution" value="1.39 A"/>
    <property type="chains" value="A/B=25-131"/>
</dbReference>
<dbReference type="PDB" id="1K0X">
    <property type="method" value="NMR"/>
    <property type="chains" value="A=25-131"/>
</dbReference>
<dbReference type="PDB" id="5IXB">
    <property type="method" value="X-ray"/>
    <property type="resolution" value="1.39 A"/>
    <property type="chains" value="A/B=25-131"/>
</dbReference>
<dbReference type="PDBsum" id="1HJD"/>
<dbReference type="PDBsum" id="1I1J"/>
<dbReference type="PDBsum" id="1K0X"/>
<dbReference type="PDBsum" id="5IXB"/>
<dbReference type="BMRB" id="Q16674"/>
<dbReference type="SMR" id="Q16674"/>
<dbReference type="BioGRID" id="113834">
    <property type="interactions" value="3"/>
</dbReference>
<dbReference type="FunCoup" id="Q16674">
    <property type="interactions" value="197"/>
</dbReference>
<dbReference type="IntAct" id="Q16674">
    <property type="interactions" value="1"/>
</dbReference>
<dbReference type="STRING" id="9606.ENSP00000470129"/>
<dbReference type="GlyGen" id="Q16674">
    <property type="glycosylation" value="2 sites, 1 O-linked glycan (2 sites)"/>
</dbReference>
<dbReference type="iPTMnet" id="Q16674"/>
<dbReference type="PhosphoSitePlus" id="Q16674"/>
<dbReference type="BioMuta" id="MIA"/>
<dbReference type="DMDM" id="2498559"/>
<dbReference type="jPOST" id="Q16674"/>
<dbReference type="MassIVE" id="Q16674"/>
<dbReference type="PaxDb" id="9606-ENSP00000263369"/>
<dbReference type="PeptideAtlas" id="Q16674"/>
<dbReference type="ProteomicsDB" id="61031">
    <molecule id="Q16674-1"/>
</dbReference>
<dbReference type="Antibodypedia" id="60691">
    <property type="antibodies" value="234 antibodies from 32 providers"/>
</dbReference>
<dbReference type="DNASU" id="8190"/>
<dbReference type="Ensembl" id="ENST00000263369.4">
    <molecule id="Q16674-1"/>
    <property type="protein sequence ID" value="ENSP00000263369.2"/>
    <property type="gene ID" value="ENSG00000261857.7"/>
</dbReference>
<dbReference type="Ensembl" id="ENST00000594436.5">
    <molecule id="Q16674-1"/>
    <property type="protein sequence ID" value="ENSP00000470129.1"/>
    <property type="gene ID" value="ENSG00000261857.7"/>
</dbReference>
<dbReference type="Ensembl" id="ENST00000597784.5">
    <molecule id="Q16674-1"/>
    <property type="protein sequence ID" value="ENSP00000469499.1"/>
    <property type="gene ID" value="ENSG00000261857.7"/>
</dbReference>
<dbReference type="GeneID" id="8190"/>
<dbReference type="KEGG" id="hsa:8190"/>
<dbReference type="MANE-Select" id="ENST00000263369.4">
    <property type="protein sequence ID" value="ENSP00000263369.2"/>
    <property type="RefSeq nucleotide sequence ID" value="NM_006533.4"/>
    <property type="RefSeq protein sequence ID" value="NP_006524.1"/>
</dbReference>
<dbReference type="UCSC" id="uc002opb.5">
    <molecule id="Q16674-1"/>
    <property type="organism name" value="human"/>
</dbReference>
<dbReference type="AGR" id="HGNC:7076"/>
<dbReference type="CTD" id="8190"/>
<dbReference type="DisGeNET" id="8190"/>
<dbReference type="GeneCards" id="MIA"/>
<dbReference type="HGNC" id="HGNC:7076">
    <property type="gene designation" value="MIA"/>
</dbReference>
<dbReference type="HPA" id="ENSG00000261857">
    <property type="expression patterns" value="Tissue enhanced (breast, pituitary gland, salivary gland, stomach)"/>
</dbReference>
<dbReference type="MIM" id="601340">
    <property type="type" value="gene"/>
</dbReference>
<dbReference type="neXtProt" id="NX_Q16674"/>
<dbReference type="OpenTargets" id="ENSG00000261857"/>
<dbReference type="PharmGKB" id="PA30800"/>
<dbReference type="VEuPathDB" id="HostDB:ENSG00000261857"/>
<dbReference type="eggNOG" id="ENOG502S2XN">
    <property type="taxonomic scope" value="Eukaryota"/>
</dbReference>
<dbReference type="GeneTree" id="ENSGT00950000182767"/>
<dbReference type="HOGENOM" id="CLU_158739_0_0_1"/>
<dbReference type="InParanoid" id="Q16674"/>
<dbReference type="OMA" id="VVQENQY"/>
<dbReference type="OrthoDB" id="6627676at2759"/>
<dbReference type="PAN-GO" id="Q16674">
    <property type="GO annotations" value="1 GO annotation based on evolutionary models"/>
</dbReference>
<dbReference type="PhylomeDB" id="Q16674"/>
<dbReference type="TreeFam" id="TF332724"/>
<dbReference type="PathwayCommons" id="Q16674"/>
<dbReference type="SignaLink" id="Q16674"/>
<dbReference type="BioGRID-ORCS" id="8190">
    <property type="hits" value="10 hits in 1135 CRISPR screens"/>
</dbReference>
<dbReference type="EvolutionaryTrace" id="Q16674"/>
<dbReference type="GeneWiki" id="Melanoma_inhibitory_activity"/>
<dbReference type="GenomeRNAi" id="8190"/>
<dbReference type="Pharos" id="Q16674">
    <property type="development level" value="Tbio"/>
</dbReference>
<dbReference type="PRO" id="PR:Q16674"/>
<dbReference type="Proteomes" id="UP000005640">
    <property type="component" value="Chromosome 19"/>
</dbReference>
<dbReference type="RNAct" id="Q16674">
    <property type="molecule type" value="protein"/>
</dbReference>
<dbReference type="Bgee" id="ENSG00000261857">
    <property type="expression patterns" value="Expressed in tibial nerve and 98 other cell types or tissues"/>
</dbReference>
<dbReference type="ExpressionAtlas" id="Q16674">
    <property type="expression patterns" value="baseline and differential"/>
</dbReference>
<dbReference type="GO" id="GO:0005615">
    <property type="term" value="C:extracellular space"/>
    <property type="evidence" value="ECO:0000304"/>
    <property type="project" value="ProtInc"/>
</dbReference>
<dbReference type="GO" id="GO:0008083">
    <property type="term" value="F:growth factor activity"/>
    <property type="evidence" value="ECO:0007669"/>
    <property type="project" value="UniProtKB-KW"/>
</dbReference>
<dbReference type="GO" id="GO:0030198">
    <property type="term" value="P:extracellular matrix organization"/>
    <property type="evidence" value="ECO:0000318"/>
    <property type="project" value="GO_Central"/>
</dbReference>
<dbReference type="CDD" id="cd11890">
    <property type="entry name" value="MIA"/>
    <property type="match status" value="1"/>
</dbReference>
<dbReference type="FunFam" id="2.30.30.40:FF:000175">
    <property type="entry name" value="Melanoma-derived growth regulatory protein"/>
    <property type="match status" value="1"/>
</dbReference>
<dbReference type="Gene3D" id="2.30.30.40">
    <property type="entry name" value="SH3 Domains"/>
    <property type="match status" value="1"/>
</dbReference>
<dbReference type="InterPro" id="IPR043369">
    <property type="entry name" value="MIA"/>
</dbReference>
<dbReference type="InterPro" id="IPR036028">
    <property type="entry name" value="SH3-like_dom_sf"/>
</dbReference>
<dbReference type="InterPro" id="IPR001452">
    <property type="entry name" value="SH3_domain"/>
</dbReference>
<dbReference type="PANTHER" id="PTHR47312">
    <property type="entry name" value="MELANOMA-DERIVED GROWTH REGULATORY PROTEIN"/>
    <property type="match status" value="1"/>
</dbReference>
<dbReference type="PANTHER" id="PTHR47312:SF1">
    <property type="entry name" value="MELANOMA-DERIVED GROWTH REGULATORY PROTEIN"/>
    <property type="match status" value="1"/>
</dbReference>
<dbReference type="Pfam" id="PF07653">
    <property type="entry name" value="SH3_2"/>
    <property type="match status" value="1"/>
</dbReference>
<dbReference type="SMART" id="SM00326">
    <property type="entry name" value="SH3"/>
    <property type="match status" value="1"/>
</dbReference>
<dbReference type="SUPFAM" id="SSF50044">
    <property type="entry name" value="SH3-domain"/>
    <property type="match status" value="1"/>
</dbReference>
<dbReference type="PROSITE" id="PS50002">
    <property type="entry name" value="SH3"/>
    <property type="match status" value="1"/>
</dbReference>
<reference key="1">
    <citation type="journal article" date="1994" name="Cancer Res.">
        <title>Cloning of a novel malignant melanoma-derived growth-regulatory protein, MIA.</title>
        <authorList>
            <person name="Blesch A."/>
            <person name="Bosserhoff A.-K."/>
            <person name="Apfel R."/>
            <person name="Behl C."/>
            <person name="Hessdoerfer B."/>
            <person name="Schmitt A."/>
            <person name="Jachimczak P."/>
            <person name="Lottspeich F."/>
            <person name="Buettner R."/>
            <person name="Bogdahn U."/>
        </authorList>
    </citation>
    <scope>NUCLEOTIDE SEQUENCE [MRNA] (ISOFORM 1)</scope>
    <scope>PARTIAL PROTEIN SEQUENCE</scope>
</reference>
<reference key="2">
    <citation type="journal article" date="1996" name="J. Biol. Chem.">
        <title>Structure and promoter analysis of the gene encoding the human melanoma-inhibiting protein MIA.</title>
        <authorList>
            <person name="Bosserhoff A.-K."/>
            <person name="Hein R."/>
            <person name="Bogdahn U."/>
            <person name="Buettner R."/>
        </authorList>
    </citation>
    <scope>NUCLEOTIDE SEQUENCE [GENOMIC DNA]</scope>
    <source>
        <tissue>Placenta</tissue>
    </source>
</reference>
<reference key="3">
    <citation type="journal article" date="2002" name="J. Invest. Dermatol.">
        <title>Cloning and characterization of the expression pattern of a novel splice product MIA (splice) of malignant melanoma-derived growth-inhibiting activity (MIA/CD-RAP).</title>
        <authorList>
            <person name="Hau P."/>
            <person name="Wise P."/>
            <person name="Bosserhoff A.K."/>
            <person name="Blesch A."/>
            <person name="Jachimczak P."/>
            <person name="Tschertner I."/>
            <person name="Bogdahn U."/>
            <person name="Apfel R."/>
        </authorList>
    </citation>
    <scope>NUCLEOTIDE SEQUENCE [GENOMIC DNA / MRNA] (ISOFORMS 1 AND 2)</scope>
    <scope>ALTERNATIVE SPLICING</scope>
</reference>
<reference key="4">
    <citation type="submission" date="2003-05" db="EMBL/GenBank/DDBJ databases">
        <title>Cloning of human full-length CDSs in BD Creator(TM) system donor vector.</title>
        <authorList>
            <person name="Kalnine N."/>
            <person name="Chen X."/>
            <person name="Rolfs A."/>
            <person name="Halleck A."/>
            <person name="Hines L."/>
            <person name="Eisenstein S."/>
            <person name="Koundinya M."/>
            <person name="Raphael J."/>
            <person name="Moreira D."/>
            <person name="Kelley T."/>
            <person name="LaBaer J."/>
            <person name="Lin Y."/>
            <person name="Phelan M."/>
            <person name="Farmer A."/>
        </authorList>
    </citation>
    <scope>NUCLEOTIDE SEQUENCE [LARGE SCALE MRNA] (ISOFORM 1)</scope>
</reference>
<reference key="5">
    <citation type="submission" date="2004-06" db="EMBL/GenBank/DDBJ databases">
        <title>Cloning of human full open reading frames in Gateway(TM) system entry vector (pDONR201).</title>
        <authorList>
            <person name="Ebert L."/>
            <person name="Schick M."/>
            <person name="Neubert P."/>
            <person name="Schatten R."/>
            <person name="Henze S."/>
            <person name="Korn B."/>
        </authorList>
    </citation>
    <scope>NUCLEOTIDE SEQUENCE [LARGE SCALE MRNA] (ISOFORM 1)</scope>
</reference>
<reference key="6">
    <citation type="submission" date="2005-07" db="EMBL/GenBank/DDBJ databases">
        <authorList>
            <person name="Mural R.J."/>
            <person name="Istrail S."/>
            <person name="Sutton G.G."/>
            <person name="Florea L."/>
            <person name="Halpern A.L."/>
            <person name="Mobarry C.M."/>
            <person name="Lippert R."/>
            <person name="Walenz B."/>
            <person name="Shatkay H."/>
            <person name="Dew I."/>
            <person name="Miller J.R."/>
            <person name="Flanigan M.J."/>
            <person name="Edwards N.J."/>
            <person name="Bolanos R."/>
            <person name="Fasulo D."/>
            <person name="Halldorsson B.V."/>
            <person name="Hannenhalli S."/>
            <person name="Turner R."/>
            <person name="Yooseph S."/>
            <person name="Lu F."/>
            <person name="Nusskern D.R."/>
            <person name="Shue B.C."/>
            <person name="Zheng X.H."/>
            <person name="Zhong F."/>
            <person name="Delcher A.L."/>
            <person name="Huson D.H."/>
            <person name="Kravitz S.A."/>
            <person name="Mouchard L."/>
            <person name="Reinert K."/>
            <person name="Remington K.A."/>
            <person name="Clark A.G."/>
            <person name="Waterman M.S."/>
            <person name="Eichler E.E."/>
            <person name="Adams M.D."/>
            <person name="Hunkapiller M.W."/>
            <person name="Myers E.W."/>
            <person name="Venter J.C."/>
        </authorList>
    </citation>
    <scope>NUCLEOTIDE SEQUENCE [LARGE SCALE GENOMIC DNA]</scope>
</reference>
<reference key="7">
    <citation type="journal article" date="2004" name="Genome Res.">
        <title>The status, quality, and expansion of the NIH full-length cDNA project: the Mammalian Gene Collection (MGC).</title>
        <authorList>
            <consortium name="The MGC Project Team"/>
        </authorList>
    </citation>
    <scope>NUCLEOTIDE SEQUENCE [LARGE SCALE MRNA] (ISOFORM 1)</scope>
    <source>
        <tissue>Skin</tissue>
    </source>
</reference>
<reference key="8">
    <citation type="journal article" date="2004" name="Protein Sci.">
        <title>Signal peptide prediction based on analysis of experimentally verified cleavage sites.</title>
        <authorList>
            <person name="Zhang Z."/>
            <person name="Henzel W.J."/>
        </authorList>
    </citation>
    <scope>PROTEIN SEQUENCE OF 25-39</scope>
</reference>
<reference key="9">
    <citation type="journal article" date="2009" name="BMC Immunol.">
        <title>Identification of SH3 domain interaction partners of human FasL (CD178) by phage display screening.</title>
        <authorList>
            <person name="Voss M."/>
            <person name="Lettau M."/>
            <person name="Janssen O."/>
        </authorList>
    </citation>
    <scope>INTERACTION WITH FASLG</scope>
</reference>
<reference key="10">
    <citation type="journal article" date="2012" name="Mol. Biol. Cell">
        <title>Identification of IGPR-1 as a novel adhesion molecule involved in angiogenesis.</title>
        <authorList>
            <person name="Rahimi N."/>
            <person name="Rezazadeh K."/>
            <person name="Mahoney J.E."/>
            <person name="Hartsough E."/>
            <person name="Meyer R.D."/>
        </authorList>
    </citation>
    <scope>INTERACTION WITH TMIGD2</scope>
</reference>
<reference key="11">
    <citation type="journal article" date="2001" name="Proc. Natl. Acad. Sci. U.S.A.">
        <title>Structure of melanoma inhibitory activity protein, a member of a recently identified family of secreted proteins.</title>
        <authorList>
            <person name="Lougheed J.C."/>
            <person name="Holton J.M."/>
            <person name="Alber T."/>
            <person name="Bazan J.F."/>
            <person name="Handel T.M."/>
        </authorList>
    </citation>
    <scope>X-RAY CRYSTALLOGRAPHY (1.39 ANGSTROMS) OF 25-131</scope>
</reference>
<name>MIA_HUMAN</name>
<sequence length="131" mass="14509">MARSLVCLGVIILLSAFSGPGVRGGPMPKLADRKLCADQECSHPISMAVALQDYMAPDCRFLTIHRGQVVYVFSKLKGRGRLFWGGSVQGDYYGDLAARLGYFPSSIVREDQTLKPGKVDVKTDKWDFYCQ</sequence>
<proteinExistence type="evidence at protein level"/>
<keyword id="KW-0002">3D-structure</keyword>
<keyword id="KW-0025">Alternative splicing</keyword>
<keyword id="KW-0903">Direct protein sequencing</keyword>
<keyword id="KW-1015">Disulfide bond</keyword>
<keyword id="KW-0339">Growth factor</keyword>
<keyword id="KW-1267">Proteomics identification</keyword>
<keyword id="KW-1185">Reference proteome</keyword>
<keyword id="KW-0964">Secreted</keyword>
<keyword id="KW-0728">SH3 domain</keyword>
<keyword id="KW-0732">Signal</keyword>
<evidence type="ECO:0000255" key="1">
    <source>
        <dbReference type="PROSITE-ProRule" id="PRU00192"/>
    </source>
</evidence>
<evidence type="ECO:0000269" key="2">
    <source>
    </source>
</evidence>
<evidence type="ECO:0000269" key="3">
    <source>
    </source>
</evidence>
<evidence type="ECO:0000269" key="4">
    <source>
    </source>
</evidence>
<evidence type="ECO:0000303" key="5">
    <source>
    </source>
</evidence>
<evidence type="ECO:0000305" key="6"/>
<evidence type="ECO:0007829" key="7">
    <source>
        <dbReference type="PDB" id="1HJD"/>
    </source>
</evidence>
<evidence type="ECO:0007829" key="8">
    <source>
        <dbReference type="PDB" id="1I1J"/>
    </source>
</evidence>
<evidence type="ECO:0007829" key="9">
    <source>
        <dbReference type="PDB" id="5IXB"/>
    </source>
</evidence>
<accession>Q16674</accession>
<accession>Q6FHV3</accession>
<protein>
    <recommendedName>
        <fullName>Melanoma-derived growth regulatory protein</fullName>
    </recommendedName>
    <alternativeName>
        <fullName>Melanoma inhibitory activity protein</fullName>
    </alternativeName>
</protein>
<comment type="function">
    <text>Elicits growth inhibition on melanoma cells in vitro as well as some other neuroectodermal tumors, including gliomas.</text>
</comment>
<comment type="subunit">
    <text evidence="3 4">Interacts with FASLG. Interacts with TMIGD2.</text>
</comment>
<comment type="subcellular location">
    <subcellularLocation>
        <location>Secreted</location>
    </subcellularLocation>
</comment>
<comment type="alternative products">
    <event type="alternative splicing"/>
    <isoform>
        <id>Q16674-1</id>
        <name>1</name>
        <sequence type="displayed"/>
    </isoform>
    <isoform>
        <id>Q16674-2</id>
        <name>2</name>
        <name>MIA-splice</name>
        <sequence type="described" ref="VSP_044450"/>
    </isoform>
</comment>
<comment type="tissue specificity">
    <text>All malignant melanoma cell lines tested and infrequently in glioma cell lines.</text>
</comment>
<comment type="PTM">
    <text>May possess two intramolecular disulfide bonds.</text>
</comment>
<comment type="similarity">
    <text evidence="6">Belongs to the MIA/OTOR family.</text>
</comment>
<feature type="signal peptide" evidence="2">
    <location>
        <begin position="1"/>
        <end position="24"/>
    </location>
</feature>
<feature type="chain" id="PRO_0000019028" description="Melanoma-derived growth regulatory protein">
    <location>
        <begin position="25"/>
        <end position="131"/>
    </location>
</feature>
<feature type="domain" description="SH3" evidence="1">
    <location>
        <begin position="43"/>
        <end position="113"/>
    </location>
</feature>
<feature type="disulfide bond">
    <location>
        <begin position="36"/>
        <end position="41"/>
    </location>
</feature>
<feature type="disulfide bond">
    <location>
        <begin position="59"/>
        <end position="130"/>
    </location>
</feature>
<feature type="splice variant" id="VSP_044450" description="In isoform 2." evidence="5">
    <original>HPISMAVALQDYMAPDCRFLTIHRGQVVYVFSKLKGRGRLFWGGSVQGDYYGDLAARLGYFPSSIVREDQTLKPGKVDVKTDKWDFYCQ</original>
    <variation>RSGRLLWRSGCSPGLFPQ</variation>
    <location>
        <begin position="43"/>
        <end position="131"/>
    </location>
</feature>
<feature type="strand" evidence="8">
    <location>
        <begin position="32"/>
        <end position="38"/>
    </location>
</feature>
<feature type="strand" evidence="8">
    <location>
        <begin position="45"/>
        <end position="52"/>
    </location>
</feature>
<feature type="strand" evidence="7">
    <location>
        <begin position="57"/>
        <end position="61"/>
    </location>
</feature>
<feature type="strand" evidence="8">
    <location>
        <begin position="69"/>
        <end position="76"/>
    </location>
</feature>
<feature type="helix" evidence="8">
    <location>
        <begin position="78"/>
        <end position="80"/>
    </location>
</feature>
<feature type="strand" evidence="8">
    <location>
        <begin position="83"/>
        <end position="89"/>
    </location>
</feature>
<feature type="strand" evidence="8">
    <location>
        <begin position="101"/>
        <end position="104"/>
    </location>
</feature>
<feature type="helix" evidence="8">
    <location>
        <begin position="105"/>
        <end position="107"/>
    </location>
</feature>
<feature type="strand" evidence="8">
    <location>
        <begin position="108"/>
        <end position="113"/>
    </location>
</feature>
<feature type="strand" evidence="8">
    <location>
        <begin position="119"/>
        <end position="122"/>
    </location>
</feature>
<feature type="helix" evidence="9">
    <location>
        <begin position="125"/>
        <end position="128"/>
    </location>
</feature>